<organism>
    <name type="scientific">Ovis aries</name>
    <name type="common">Sheep</name>
    <dbReference type="NCBI Taxonomy" id="9940"/>
    <lineage>
        <taxon>Eukaryota</taxon>
        <taxon>Metazoa</taxon>
        <taxon>Chordata</taxon>
        <taxon>Craniata</taxon>
        <taxon>Vertebrata</taxon>
        <taxon>Euteleostomi</taxon>
        <taxon>Mammalia</taxon>
        <taxon>Eutheria</taxon>
        <taxon>Laurasiatheria</taxon>
        <taxon>Artiodactyla</taxon>
        <taxon>Ruminantia</taxon>
        <taxon>Pecora</taxon>
        <taxon>Bovidae</taxon>
        <taxon>Caprinae</taxon>
        <taxon>Ovis</taxon>
    </lineage>
</organism>
<name>K2M2_SHEEP</name>
<proteinExistence type="evidence at protein level"/>
<keyword id="KW-0175">Coiled coil</keyword>
<keyword id="KW-0903">Direct protein sequencing</keyword>
<keyword id="KW-0403">Intermediate filament</keyword>
<keyword id="KW-0416">Keratin</keyword>
<keyword id="KW-1185">Reference proteome</keyword>
<dbReference type="PIR" id="S05408">
    <property type="entry name" value="S05408"/>
</dbReference>
<dbReference type="SMR" id="P15241"/>
<dbReference type="STRING" id="9940.ENSOARP00000018368"/>
<dbReference type="PaxDb" id="9940-ENSOARP00000018368"/>
<dbReference type="eggNOG" id="ENOG502SKJW">
    <property type="taxonomic scope" value="Eukaryota"/>
</dbReference>
<dbReference type="Proteomes" id="UP000002356">
    <property type="component" value="Unplaced"/>
</dbReference>
<dbReference type="GO" id="GO:0005615">
    <property type="term" value="C:extracellular space"/>
    <property type="evidence" value="ECO:0007669"/>
    <property type="project" value="TreeGrafter"/>
</dbReference>
<dbReference type="GO" id="GO:0045095">
    <property type="term" value="C:keratin filament"/>
    <property type="evidence" value="ECO:0007669"/>
    <property type="project" value="InterPro"/>
</dbReference>
<dbReference type="GO" id="GO:0030280">
    <property type="term" value="F:structural constituent of skin epidermis"/>
    <property type="evidence" value="ECO:0007669"/>
    <property type="project" value="TreeGrafter"/>
</dbReference>
<dbReference type="GO" id="GO:0045109">
    <property type="term" value="P:intermediate filament organization"/>
    <property type="evidence" value="ECO:0007669"/>
    <property type="project" value="TreeGrafter"/>
</dbReference>
<dbReference type="GO" id="GO:0031424">
    <property type="term" value="P:keratinization"/>
    <property type="evidence" value="ECO:0007669"/>
    <property type="project" value="TreeGrafter"/>
</dbReference>
<dbReference type="FunFam" id="1.20.5.1160:FF:000001">
    <property type="entry name" value="Keratin type II"/>
    <property type="match status" value="1"/>
</dbReference>
<dbReference type="FunFam" id="1.20.5.170:FF:000004">
    <property type="entry name" value="Keratin, type II cytoskeletal 5"/>
    <property type="match status" value="1"/>
</dbReference>
<dbReference type="FunFam" id="1.20.5.500:FF:000001">
    <property type="entry name" value="Type II keratin 23"/>
    <property type="match status" value="1"/>
</dbReference>
<dbReference type="Gene3D" id="1.20.5.170">
    <property type="match status" value="1"/>
</dbReference>
<dbReference type="Gene3D" id="1.20.5.500">
    <property type="entry name" value="Single helix bin"/>
    <property type="match status" value="1"/>
</dbReference>
<dbReference type="Gene3D" id="1.20.5.1160">
    <property type="entry name" value="Vasodilator-stimulated phosphoprotein"/>
    <property type="match status" value="1"/>
</dbReference>
<dbReference type="InterPro" id="IPR018039">
    <property type="entry name" value="IF_conserved"/>
</dbReference>
<dbReference type="InterPro" id="IPR039008">
    <property type="entry name" value="IF_rod_dom"/>
</dbReference>
<dbReference type="InterPro" id="IPR032444">
    <property type="entry name" value="Keratin_2_head"/>
</dbReference>
<dbReference type="InterPro" id="IPR003054">
    <property type="entry name" value="Keratin_II"/>
</dbReference>
<dbReference type="PANTHER" id="PTHR45616">
    <property type="entry name" value="GATA-TYPE DOMAIN-CONTAINING PROTEIN"/>
    <property type="match status" value="1"/>
</dbReference>
<dbReference type="PANTHER" id="PTHR45616:SF52">
    <property type="entry name" value="KERATIN, TYPE II CUTICULAR HB3"/>
    <property type="match status" value="1"/>
</dbReference>
<dbReference type="Pfam" id="PF00038">
    <property type="entry name" value="Filament"/>
    <property type="match status" value="1"/>
</dbReference>
<dbReference type="Pfam" id="PF16208">
    <property type="entry name" value="Keratin_2_head"/>
    <property type="match status" value="1"/>
</dbReference>
<dbReference type="PRINTS" id="PR01276">
    <property type="entry name" value="TYPE2KERATIN"/>
</dbReference>
<dbReference type="SMART" id="SM01391">
    <property type="entry name" value="Filament"/>
    <property type="match status" value="1"/>
</dbReference>
<dbReference type="SUPFAM" id="SSF64593">
    <property type="entry name" value="Intermediate filament protein, coiled coil region"/>
    <property type="match status" value="2"/>
</dbReference>
<dbReference type="PROSITE" id="PS00226">
    <property type="entry name" value="IF_ROD_1"/>
    <property type="match status" value="1"/>
</dbReference>
<dbReference type="PROSITE" id="PS51842">
    <property type="entry name" value="IF_ROD_2"/>
    <property type="match status" value="1"/>
</dbReference>
<reference key="1">
    <citation type="journal article" date="1989" name="Biochem. J.">
        <title>The amino acid sequence of component 7c, a type II intermediate-filament protein from wool.</title>
        <authorList>
            <person name="Sparrow L.G."/>
            <person name="Robinson C.P."/>
            <person name="McMahon D.T.W."/>
            <person name="Rubira M.R."/>
        </authorList>
    </citation>
    <scope>PROTEIN SEQUENCE</scope>
</reference>
<evidence type="ECO:0000255" key="1">
    <source>
        <dbReference type="PROSITE-ProRule" id="PRU01188"/>
    </source>
</evidence>
<sequence>CGFSTVGSGFGSRAFSCVSACGPRPGRCCITAAPYRGISCYRGLTGGFGSRSVCGGFRAGSCGRSFGYRSGGVCGPSPPCITTVSVNESLLTPLNLEIDPNAQCVKQEEKEQIKCLNNRFAAFIDKVRFLEQQNKLLETKLQFFQNRQCCESNLEPLFEGYIETLRREAECVEADSGRLSSELNHVQEVLEGYKKKYEQEVALRATAENEFVALKKDVDCAYVRKSDLEANSEALIQEIDFLRRLYQEEIRVLQANISDTSVIVKMDNSRDLNMDCIVAEIKAQYDDIASRSRAEAESWYRSKCEEIKATVIRHGETLRRTKEEINELNRVIQRLTAEVENAKCQNSKLEAAVTQAEQQGEVALNDARCKLAGLEEALQKAKQDMACLLKEYQEVMNSKLGLDIEIATYRRLLEGEEQRLCEGVGAVNVCVSSSRGGVVCGDLCVSGSRPVTGSVCSAPCSGNLAVSTGLCAPCGQLNTTCGGGSCSLGRC</sequence>
<feature type="chain" id="PRO_0000063748" description="Keratin, type II microfibrillar, component 7C">
    <location>
        <begin position="1"/>
        <end position="491"/>
    </location>
</feature>
<feature type="domain" description="IF rod" evidence="1">
    <location>
        <begin position="109"/>
        <end position="420"/>
    </location>
</feature>
<feature type="region of interest" description="Head">
    <location>
        <begin position="1"/>
        <end position="109"/>
    </location>
</feature>
<feature type="region of interest" description="Coil 1A">
    <location>
        <begin position="110"/>
        <end position="144"/>
    </location>
</feature>
<feature type="region of interest" description="Linker 1">
    <location>
        <begin position="145"/>
        <end position="154"/>
    </location>
</feature>
<feature type="region of interest" description="Coil 1B">
    <location>
        <begin position="155"/>
        <end position="255"/>
    </location>
</feature>
<feature type="region of interest" description="Linker 12">
    <location>
        <begin position="256"/>
        <end position="272"/>
    </location>
</feature>
<feature type="region of interest" description="Coil 2">
    <location>
        <begin position="273"/>
        <end position="416"/>
    </location>
</feature>
<feature type="region of interest" description="Tail">
    <location>
        <begin position="417"/>
        <end position="491"/>
    </location>
</feature>
<feature type="modified residue" description="Blocked amino end (Cys)">
    <location>
        <position position="1"/>
    </location>
</feature>
<feature type="sequence variant">
    <original>C</original>
    <variation>G</variation>
    <location>
        <position position="74"/>
    </location>
</feature>
<feature type="sequence variant">
    <original>C</original>
    <variation>S</variation>
    <location>
        <position position="74"/>
    </location>
</feature>
<feature type="sequence variant">
    <original>C</original>
    <variation>S</variation>
    <location>
        <position position="80"/>
    </location>
</feature>
<feature type="sequence variant">
    <original>F</original>
    <variation>Y</variation>
    <location>
        <position position="144"/>
    </location>
</feature>
<feature type="sequence variant">
    <original>S</original>
    <variation>V</variation>
    <location>
        <position position="232"/>
    </location>
</feature>
<feature type="sequence variant">
    <original>C</original>
    <variation>D</variation>
    <location>
        <position position="276"/>
    </location>
</feature>
<feature type="sequence variant">
    <original>C</original>
    <variation>N</variation>
    <location>
        <position position="276"/>
    </location>
</feature>
<feature type="sequence variant">
    <original>Q</original>
    <variation>H</variation>
    <location>
        <position position="284"/>
    </location>
</feature>
<feature type="unsure residue" description="CG or GC">
    <location>
        <begin position="1"/>
        <end position="2"/>
    </location>
</feature>
<comment type="function">
    <text>Wool microfibrillar keratin.</text>
</comment>
<comment type="miscellaneous">
    <text>There are two types of cytoskeletal and microfibrillar keratin: I (acidic; 40-55 kDa) and II (neutral to basic; 56-70 kDa).</text>
</comment>
<comment type="miscellaneous">
    <text>The low-sulfur proteins, derived from the microfibrillar fraction of wool extracts, are composed of two families, each consisting of 4 homologous subunits: the type I components (8C-1, 8C-2, 8A and 8B) and the type II components (5, 7A, 7B, and 7C).</text>
</comment>
<comment type="similarity">
    <text evidence="1">Belongs to the intermediate filament family.</text>
</comment>
<protein>
    <recommendedName>
        <fullName>Keratin, type II microfibrillar, component 7C</fullName>
    </recommendedName>
</protein>
<accession>P15241</accession>